<dbReference type="EC" id="1.1.1.37" evidence="1"/>
<dbReference type="EMBL" id="AY320468">
    <property type="protein sequence ID" value="AAP82994.1"/>
    <property type="molecule type" value="Genomic_DNA"/>
</dbReference>
<dbReference type="EMBL" id="AY320469">
    <property type="protein sequence ID" value="AAP82995.1"/>
    <property type="molecule type" value="Genomic_DNA"/>
</dbReference>
<dbReference type="EMBL" id="AY320470">
    <property type="protein sequence ID" value="AAP82996.1"/>
    <property type="molecule type" value="Genomic_DNA"/>
</dbReference>
<dbReference type="EMBL" id="CP000026">
    <property type="protein sequence ID" value="AAV79049.1"/>
    <property type="molecule type" value="Genomic_DNA"/>
</dbReference>
<dbReference type="RefSeq" id="WP_000861586.1">
    <property type="nucleotide sequence ID" value="NC_006511.1"/>
</dbReference>
<dbReference type="SMR" id="Q7WS85"/>
<dbReference type="KEGG" id="spt:SPA3226"/>
<dbReference type="HOGENOM" id="CLU_047181_1_0_6"/>
<dbReference type="Proteomes" id="UP000008185">
    <property type="component" value="Chromosome"/>
</dbReference>
<dbReference type="GO" id="GO:0005737">
    <property type="term" value="C:cytoplasm"/>
    <property type="evidence" value="ECO:0007669"/>
    <property type="project" value="TreeGrafter"/>
</dbReference>
<dbReference type="GO" id="GO:0030060">
    <property type="term" value="F:L-malate dehydrogenase (NAD+) activity"/>
    <property type="evidence" value="ECO:0007669"/>
    <property type="project" value="UniProtKB-UniRule"/>
</dbReference>
<dbReference type="GO" id="GO:0006108">
    <property type="term" value="P:malate metabolic process"/>
    <property type="evidence" value="ECO:0007669"/>
    <property type="project" value="InterPro"/>
</dbReference>
<dbReference type="GO" id="GO:0006099">
    <property type="term" value="P:tricarboxylic acid cycle"/>
    <property type="evidence" value="ECO:0007669"/>
    <property type="project" value="UniProtKB-UniRule"/>
</dbReference>
<dbReference type="CDD" id="cd01337">
    <property type="entry name" value="MDH_glyoxysomal_mitochondrial"/>
    <property type="match status" value="1"/>
</dbReference>
<dbReference type="FunFam" id="3.40.50.720:FF:000017">
    <property type="entry name" value="Malate dehydrogenase"/>
    <property type="match status" value="1"/>
</dbReference>
<dbReference type="FunFam" id="3.90.110.10:FF:000001">
    <property type="entry name" value="Malate dehydrogenase"/>
    <property type="match status" value="1"/>
</dbReference>
<dbReference type="Gene3D" id="3.90.110.10">
    <property type="entry name" value="Lactate dehydrogenase/glycoside hydrolase, family 4, C-terminal"/>
    <property type="match status" value="1"/>
</dbReference>
<dbReference type="Gene3D" id="3.40.50.720">
    <property type="entry name" value="NAD(P)-binding Rossmann-like Domain"/>
    <property type="match status" value="1"/>
</dbReference>
<dbReference type="HAMAP" id="MF_01516">
    <property type="entry name" value="Malate_dehydrog_1"/>
    <property type="match status" value="1"/>
</dbReference>
<dbReference type="InterPro" id="IPR001557">
    <property type="entry name" value="L-lactate/malate_DH"/>
</dbReference>
<dbReference type="InterPro" id="IPR022383">
    <property type="entry name" value="Lactate/malate_DH_C"/>
</dbReference>
<dbReference type="InterPro" id="IPR001236">
    <property type="entry name" value="Lactate/malate_DH_N"/>
</dbReference>
<dbReference type="InterPro" id="IPR015955">
    <property type="entry name" value="Lactate_DH/Glyco_Ohase_4_C"/>
</dbReference>
<dbReference type="InterPro" id="IPR001252">
    <property type="entry name" value="Malate_DH_AS"/>
</dbReference>
<dbReference type="InterPro" id="IPR010097">
    <property type="entry name" value="Malate_DH_type1"/>
</dbReference>
<dbReference type="InterPro" id="IPR023958">
    <property type="entry name" value="Malate_DH_type1_bac"/>
</dbReference>
<dbReference type="InterPro" id="IPR036291">
    <property type="entry name" value="NAD(P)-bd_dom_sf"/>
</dbReference>
<dbReference type="NCBIfam" id="TIGR01772">
    <property type="entry name" value="MDH_euk_gproteo"/>
    <property type="match status" value="1"/>
</dbReference>
<dbReference type="PANTHER" id="PTHR11540">
    <property type="entry name" value="MALATE AND LACTATE DEHYDROGENASE"/>
    <property type="match status" value="1"/>
</dbReference>
<dbReference type="PANTHER" id="PTHR11540:SF16">
    <property type="entry name" value="MALATE DEHYDROGENASE, MITOCHONDRIAL"/>
    <property type="match status" value="1"/>
</dbReference>
<dbReference type="Pfam" id="PF02866">
    <property type="entry name" value="Ldh_1_C"/>
    <property type="match status" value="1"/>
</dbReference>
<dbReference type="Pfam" id="PF00056">
    <property type="entry name" value="Ldh_1_N"/>
    <property type="match status" value="1"/>
</dbReference>
<dbReference type="PIRSF" id="PIRSF000102">
    <property type="entry name" value="Lac_mal_DH"/>
    <property type="match status" value="1"/>
</dbReference>
<dbReference type="SUPFAM" id="SSF56327">
    <property type="entry name" value="LDH C-terminal domain-like"/>
    <property type="match status" value="1"/>
</dbReference>
<dbReference type="SUPFAM" id="SSF51735">
    <property type="entry name" value="NAD(P)-binding Rossmann-fold domains"/>
    <property type="match status" value="1"/>
</dbReference>
<dbReference type="PROSITE" id="PS00068">
    <property type="entry name" value="MDH"/>
    <property type="match status" value="1"/>
</dbReference>
<sequence>MKVAVLGAAGGIGQALALLLKNQLPSGSELSLYDIAPVTPGVAVDLSHIPTAVKIKGFSGEDATPALEGADVVLISAGVARKPGMDRSDLFNVNAGIVKNLVQQIAKTCPKACVGIITNPVNTTVAIAAEVLKKAGVYDKNKLFGVTTLDIIRSNTFVAELKGKLPTEVEVPVIGGHSGVTILPLLSQIPGVSFTEQEAAELTKRIQNAGTEVVEAKAGGGSATLSMGQAAARFGLSLVRALQGEKGVVECAYVEGDGQYARFFSQPLLLGKNGVEERKSIGTLSAFEQHSLDAMLDTLKKDIQLGEDFINK</sequence>
<keyword id="KW-0520">NAD</keyword>
<keyword id="KW-0560">Oxidoreductase</keyword>
<keyword id="KW-0816">Tricarboxylic acid cycle</keyword>
<evidence type="ECO:0000255" key="1">
    <source>
        <dbReference type="HAMAP-Rule" id="MF_01516"/>
    </source>
</evidence>
<accession>Q7WS85</accession>
<accession>Q5PJU4</accession>
<accession>Q7WZ09</accession>
<gene>
    <name evidence="1" type="primary">mdh</name>
    <name type="ordered locus">SPA3226</name>
</gene>
<feature type="chain" id="PRO_0000113323" description="Malate dehydrogenase">
    <location>
        <begin position="1"/>
        <end position="312"/>
    </location>
</feature>
<feature type="active site" description="Proton acceptor" evidence="1">
    <location>
        <position position="177"/>
    </location>
</feature>
<feature type="binding site" evidence="1">
    <location>
        <begin position="7"/>
        <end position="13"/>
    </location>
    <ligand>
        <name>NAD(+)</name>
        <dbReference type="ChEBI" id="CHEBI:57540"/>
    </ligand>
</feature>
<feature type="binding site" evidence="1">
    <location>
        <position position="34"/>
    </location>
    <ligand>
        <name>NAD(+)</name>
        <dbReference type="ChEBI" id="CHEBI:57540"/>
    </ligand>
</feature>
<feature type="binding site" evidence="1">
    <location>
        <position position="81"/>
    </location>
    <ligand>
        <name>substrate</name>
    </ligand>
</feature>
<feature type="binding site" evidence="1">
    <location>
        <position position="87"/>
    </location>
    <ligand>
        <name>substrate</name>
    </ligand>
</feature>
<feature type="binding site" evidence="1">
    <location>
        <position position="94"/>
    </location>
    <ligand>
        <name>NAD(+)</name>
        <dbReference type="ChEBI" id="CHEBI:57540"/>
    </ligand>
</feature>
<feature type="binding site" evidence="1">
    <location>
        <begin position="117"/>
        <end position="119"/>
    </location>
    <ligand>
        <name>NAD(+)</name>
        <dbReference type="ChEBI" id="CHEBI:57540"/>
    </ligand>
</feature>
<feature type="binding site" evidence="1">
    <location>
        <position position="119"/>
    </location>
    <ligand>
        <name>substrate</name>
    </ligand>
</feature>
<feature type="binding site" evidence="1">
    <location>
        <position position="153"/>
    </location>
    <ligand>
        <name>substrate</name>
    </ligand>
</feature>
<feature type="binding site" evidence="1">
    <location>
        <position position="227"/>
    </location>
    <ligand>
        <name>NAD(+)</name>
        <dbReference type="ChEBI" id="CHEBI:57540"/>
    </ligand>
</feature>
<feature type="sequence variant" description="In strain: ZJ-74.">
    <original>T</original>
    <variation>K</variation>
    <location>
        <position position="181"/>
    </location>
</feature>
<feature type="sequence variant" description="In strain: ZJ-74.">
    <original>S</original>
    <variation>L</variation>
    <location>
        <position position="187"/>
    </location>
</feature>
<feature type="sequence variant" description="In strain: ZJ-32 and ZJ-60.">
    <original>A</original>
    <variation>T</variation>
    <location>
        <position position="286"/>
    </location>
</feature>
<protein>
    <recommendedName>
        <fullName evidence="1">Malate dehydrogenase</fullName>
        <ecNumber evidence="1">1.1.1.37</ecNumber>
    </recommendedName>
</protein>
<comment type="function">
    <text evidence="1">Catalyzes the reversible oxidation of malate to oxaloacetate.</text>
</comment>
<comment type="catalytic activity">
    <reaction evidence="1">
        <text>(S)-malate + NAD(+) = oxaloacetate + NADH + H(+)</text>
        <dbReference type="Rhea" id="RHEA:21432"/>
        <dbReference type="ChEBI" id="CHEBI:15378"/>
        <dbReference type="ChEBI" id="CHEBI:15589"/>
        <dbReference type="ChEBI" id="CHEBI:16452"/>
        <dbReference type="ChEBI" id="CHEBI:57540"/>
        <dbReference type="ChEBI" id="CHEBI:57945"/>
        <dbReference type="EC" id="1.1.1.37"/>
    </reaction>
</comment>
<comment type="subunit">
    <text evidence="1">Homodimer.</text>
</comment>
<comment type="similarity">
    <text evidence="1">Belongs to the LDH/MDH superfamily. MDH type 1 family.</text>
</comment>
<name>MDH_SALPA</name>
<organism>
    <name type="scientific">Salmonella paratyphi A (strain ATCC 9150 / SARB42)</name>
    <dbReference type="NCBI Taxonomy" id="295319"/>
    <lineage>
        <taxon>Bacteria</taxon>
        <taxon>Pseudomonadati</taxon>
        <taxon>Pseudomonadota</taxon>
        <taxon>Gammaproteobacteria</taxon>
        <taxon>Enterobacterales</taxon>
        <taxon>Enterobacteriaceae</taxon>
        <taxon>Salmonella</taxon>
    </lineage>
</organism>
<proteinExistence type="inferred from homology"/>
<reference key="1">
    <citation type="submission" date="2003-06" db="EMBL/GenBank/DDBJ databases">
        <title>Molecular genetic relationships of the salmonellae.</title>
        <authorList>
            <person name="Li W."/>
            <person name="Kan B."/>
            <person name="Qi G.M."/>
            <person name="Gao S.Y."/>
            <person name="Liu Y.Q."/>
            <person name="Liu G.W."/>
            <person name="Wang D.C."/>
        </authorList>
    </citation>
    <scope>NUCLEOTIDE SEQUENCE [GENOMIC DNA]</scope>
    <source>
        <strain>ZJ-32</strain>
        <strain>ZJ-60</strain>
        <strain>ZJ-74</strain>
    </source>
</reference>
<reference key="2">
    <citation type="journal article" date="2004" name="Nat. Genet.">
        <title>Comparison of genome degradation in Paratyphi A and Typhi, human-restricted serovars of Salmonella enterica that cause typhoid.</title>
        <authorList>
            <person name="McClelland M."/>
            <person name="Sanderson K.E."/>
            <person name="Clifton S.W."/>
            <person name="Latreille P."/>
            <person name="Porwollik S."/>
            <person name="Sabo A."/>
            <person name="Meyer R."/>
            <person name="Bieri T."/>
            <person name="Ozersky P."/>
            <person name="McLellan M."/>
            <person name="Harkins C.R."/>
            <person name="Wang C."/>
            <person name="Nguyen C."/>
            <person name="Berghoff A."/>
            <person name="Elliott G."/>
            <person name="Kohlberg S."/>
            <person name="Strong C."/>
            <person name="Du F."/>
            <person name="Carter J."/>
            <person name="Kremizki C."/>
            <person name="Layman D."/>
            <person name="Leonard S."/>
            <person name="Sun H."/>
            <person name="Fulton L."/>
            <person name="Nash W."/>
            <person name="Miner T."/>
            <person name="Minx P."/>
            <person name="Delehaunty K."/>
            <person name="Fronick C."/>
            <person name="Magrini V."/>
            <person name="Nhan M."/>
            <person name="Warren W."/>
            <person name="Florea L."/>
            <person name="Spieth J."/>
            <person name="Wilson R.K."/>
        </authorList>
    </citation>
    <scope>NUCLEOTIDE SEQUENCE [LARGE SCALE GENOMIC DNA]</scope>
    <source>
        <strain>ATCC 9150 / SARB42</strain>
    </source>
</reference>